<protein>
    <recommendedName>
        <fullName>Uncharacterized protein HI_1601</fullName>
    </recommendedName>
</protein>
<dbReference type="EMBL" id="L42023">
    <property type="protein sequence ID" value="AAC23260.1"/>
    <property type="molecule type" value="Genomic_DNA"/>
</dbReference>
<dbReference type="PIR" id="I64037">
    <property type="entry name" value="I64037"/>
</dbReference>
<dbReference type="RefSeq" id="NP_439743.1">
    <property type="nucleotide sequence ID" value="NC_000907.1"/>
</dbReference>
<dbReference type="STRING" id="71421.HI_1601"/>
<dbReference type="EnsemblBacteria" id="AAC23260">
    <property type="protein sequence ID" value="AAC23260"/>
    <property type="gene ID" value="HI_1601"/>
</dbReference>
<dbReference type="KEGG" id="hin:HI_1601"/>
<dbReference type="PATRIC" id="fig|71421.8.peg.1674"/>
<dbReference type="eggNOG" id="COG3767">
    <property type="taxonomic scope" value="Bacteria"/>
</dbReference>
<dbReference type="HOGENOM" id="CLU_128743_1_0_6"/>
<dbReference type="OrthoDB" id="5690694at2"/>
<dbReference type="BioCyc" id="HINF71421:G1GJ1-1614-MONOMER"/>
<dbReference type="Proteomes" id="UP000000579">
    <property type="component" value="Chromosome"/>
</dbReference>
<feature type="signal peptide" description="Or 21" evidence="1">
    <location>
        <begin position="1"/>
        <end position="24"/>
    </location>
</feature>
<feature type="chain" id="PRO_0000013974" description="Uncharacterized protein HI_1601">
    <location>
        <begin position="25"/>
        <end position="95"/>
    </location>
</feature>
<feature type="region of interest" description="Disordered" evidence="2">
    <location>
        <begin position="55"/>
        <end position="95"/>
    </location>
</feature>
<feature type="compositionally biased region" description="Basic and acidic residues" evidence="2">
    <location>
        <begin position="55"/>
        <end position="89"/>
    </location>
</feature>
<organism>
    <name type="scientific">Haemophilus influenzae (strain ATCC 51907 / DSM 11121 / KW20 / Rd)</name>
    <dbReference type="NCBI Taxonomy" id="71421"/>
    <lineage>
        <taxon>Bacteria</taxon>
        <taxon>Pseudomonadati</taxon>
        <taxon>Pseudomonadota</taxon>
        <taxon>Gammaproteobacteria</taxon>
        <taxon>Pasteurellales</taxon>
        <taxon>Pasteurellaceae</taxon>
        <taxon>Haemophilus</taxon>
    </lineage>
</organism>
<keyword id="KW-1185">Reference proteome</keyword>
<keyword id="KW-0732">Signal</keyword>
<reference key="1">
    <citation type="journal article" date="1995" name="Science">
        <title>Whole-genome random sequencing and assembly of Haemophilus influenzae Rd.</title>
        <authorList>
            <person name="Fleischmann R.D."/>
            <person name="Adams M.D."/>
            <person name="White O."/>
            <person name="Clayton R.A."/>
            <person name="Kirkness E.F."/>
            <person name="Kerlavage A.R."/>
            <person name="Bult C.J."/>
            <person name="Tomb J.-F."/>
            <person name="Dougherty B.A."/>
            <person name="Merrick J.M."/>
            <person name="McKenney K."/>
            <person name="Sutton G.G."/>
            <person name="FitzHugh W."/>
            <person name="Fields C.A."/>
            <person name="Gocayne J.D."/>
            <person name="Scott J.D."/>
            <person name="Shirley R."/>
            <person name="Liu L.-I."/>
            <person name="Glodek A."/>
            <person name="Kelley J.M."/>
            <person name="Weidman J.F."/>
            <person name="Phillips C.A."/>
            <person name="Spriggs T."/>
            <person name="Hedblom E."/>
            <person name="Cotton M.D."/>
            <person name="Utterback T.R."/>
            <person name="Hanna M.C."/>
            <person name="Nguyen D.T."/>
            <person name="Saudek D.M."/>
            <person name="Brandon R.C."/>
            <person name="Fine L.D."/>
            <person name="Fritchman J.L."/>
            <person name="Fuhrmann J.L."/>
            <person name="Geoghagen N.S.M."/>
            <person name="Gnehm C.L."/>
            <person name="McDonald L.A."/>
            <person name="Small K.V."/>
            <person name="Fraser C.M."/>
            <person name="Smith H.O."/>
            <person name="Venter J.C."/>
        </authorList>
    </citation>
    <scope>NUCLEOTIDE SEQUENCE [LARGE SCALE GENOMIC DNA]</scope>
    <source>
        <strain>ATCC 51907 / DSM 11121 / KW20 / Rd</strain>
    </source>
</reference>
<evidence type="ECO:0000255" key="1"/>
<evidence type="ECO:0000256" key="2">
    <source>
        <dbReference type="SAM" id="MobiDB-lite"/>
    </source>
</evidence>
<accession>P44269</accession>
<gene>
    <name type="ordered locus">HI_1601</name>
</gene>
<name>Y1601_HAEIN</name>
<sequence>MKKLATLTALAGALTMAVATAAQAESKSSSTDNTATPCVGDKCVKTKAAEGKCGEGKCGADKAKSAEGKCGEGKCGADKAKSAEGKCGEGKCGSK</sequence>
<proteinExistence type="inferred from homology"/>